<feature type="chain" id="PRO_1000026690" description="Phosphatidylserine decarboxylase beta chain" evidence="1">
    <location>
        <begin position="1"/>
        <end position="187"/>
    </location>
</feature>
<feature type="chain" id="PRO_1000026691" description="Phosphatidylserine decarboxylase alpha chain" evidence="1">
    <location>
        <begin position="188"/>
        <end position="231"/>
    </location>
</feature>
<feature type="active site" description="Schiff-base intermediate with substrate; via pyruvic acid" evidence="1">
    <location>
        <position position="188"/>
    </location>
</feature>
<feature type="site" description="Cleavage (non-hydrolytic); by autocatalysis" evidence="1">
    <location>
        <begin position="187"/>
        <end position="188"/>
    </location>
</feature>
<feature type="modified residue" description="Pyruvic acid (Ser); by autocatalysis" evidence="1">
    <location>
        <position position="188"/>
    </location>
</feature>
<gene>
    <name evidence="1" type="primary">psd</name>
    <name type="ordered locus">A1G_01860</name>
</gene>
<proteinExistence type="inferred from homology"/>
<reference key="1">
    <citation type="submission" date="2007-09" db="EMBL/GenBank/DDBJ databases">
        <title>Complete genome sequence of Rickettsia rickettsii.</title>
        <authorList>
            <person name="Madan A."/>
            <person name="Fahey J."/>
            <person name="Helton E."/>
            <person name="Ketteman M."/>
            <person name="Madan A."/>
            <person name="Rodrigues S."/>
            <person name="Sanchez A."/>
            <person name="Dasch G."/>
            <person name="Eremeeva M."/>
        </authorList>
    </citation>
    <scope>NUCLEOTIDE SEQUENCE [LARGE SCALE GENOMIC DNA]</scope>
    <source>
        <strain>Sheila Smith</strain>
    </source>
</reference>
<name>PSD_RICRS</name>
<protein>
    <recommendedName>
        <fullName evidence="1">Phosphatidylserine decarboxylase proenzyme</fullName>
        <ecNumber evidence="1">4.1.1.65</ecNumber>
    </recommendedName>
    <component>
        <recommendedName>
            <fullName evidence="1">Phosphatidylserine decarboxylase alpha chain</fullName>
        </recommendedName>
    </component>
    <component>
        <recommendedName>
            <fullName evidence="1">Phosphatidylserine decarboxylase beta chain</fullName>
        </recommendedName>
    </component>
</protein>
<evidence type="ECO:0000255" key="1">
    <source>
        <dbReference type="HAMAP-Rule" id="MF_00664"/>
    </source>
</evidence>
<comment type="function">
    <text evidence="1">Catalyzes the formation of phosphatidylethanolamine (PtdEtn) from phosphatidylserine (PtdSer).</text>
</comment>
<comment type="catalytic activity">
    <reaction evidence="1">
        <text>a 1,2-diacyl-sn-glycero-3-phospho-L-serine + H(+) = a 1,2-diacyl-sn-glycero-3-phosphoethanolamine + CO2</text>
        <dbReference type="Rhea" id="RHEA:20828"/>
        <dbReference type="ChEBI" id="CHEBI:15378"/>
        <dbReference type="ChEBI" id="CHEBI:16526"/>
        <dbReference type="ChEBI" id="CHEBI:57262"/>
        <dbReference type="ChEBI" id="CHEBI:64612"/>
        <dbReference type="EC" id="4.1.1.65"/>
    </reaction>
</comment>
<comment type="cofactor">
    <cofactor evidence="1">
        <name>pyruvate</name>
        <dbReference type="ChEBI" id="CHEBI:15361"/>
    </cofactor>
    <text evidence="1">Binds 1 pyruvoyl group covalently per subunit.</text>
</comment>
<comment type="pathway">
    <text evidence="1">Phospholipid metabolism; phosphatidylethanolamine biosynthesis; phosphatidylethanolamine from CDP-diacylglycerol: step 2/2.</text>
</comment>
<comment type="subunit">
    <text evidence="1">Heterodimer of a large membrane-associated beta subunit and a small pyruvoyl-containing alpha subunit.</text>
</comment>
<comment type="subcellular location">
    <subcellularLocation>
        <location evidence="1">Cell membrane</location>
        <topology evidence="1">Peripheral membrane protein</topology>
    </subcellularLocation>
</comment>
<comment type="PTM">
    <text evidence="1">Is synthesized initially as an inactive proenzyme. Formation of the active enzyme involves a self-maturation process in which the active site pyruvoyl group is generated from an internal serine residue via an autocatalytic post-translational modification. Two non-identical subunits are generated from the proenzyme in this reaction, and the pyruvate is formed at the N-terminus of the alpha chain, which is derived from the carboxyl end of the proenzyme. The post-translation cleavage follows an unusual pathway, termed non-hydrolytic serinolysis, in which the side chain hydroxyl group of the serine supplies its oxygen atom to form the C-terminus of the beta chain, while the remainder of the serine residue undergoes an oxidative deamination to produce ammonia and the pyruvoyl prosthetic group on the alpha chain.</text>
</comment>
<comment type="similarity">
    <text evidence="1">Belongs to the phosphatidylserine decarboxylase family. PSD-A subfamily.</text>
</comment>
<organism>
    <name type="scientific">Rickettsia rickettsii (strain Sheila Smith)</name>
    <dbReference type="NCBI Taxonomy" id="392021"/>
    <lineage>
        <taxon>Bacteria</taxon>
        <taxon>Pseudomonadati</taxon>
        <taxon>Pseudomonadota</taxon>
        <taxon>Alphaproteobacteria</taxon>
        <taxon>Rickettsiales</taxon>
        <taxon>Rickettsiaceae</taxon>
        <taxon>Rickettsieae</taxon>
        <taxon>Rickettsia</taxon>
        <taxon>spotted fever group</taxon>
    </lineage>
</organism>
<keyword id="KW-1003">Cell membrane</keyword>
<keyword id="KW-0210">Decarboxylase</keyword>
<keyword id="KW-0444">Lipid biosynthesis</keyword>
<keyword id="KW-0443">Lipid metabolism</keyword>
<keyword id="KW-0456">Lyase</keyword>
<keyword id="KW-0472">Membrane</keyword>
<keyword id="KW-0594">Phospholipid biosynthesis</keyword>
<keyword id="KW-1208">Phospholipid metabolism</keyword>
<keyword id="KW-0670">Pyruvate</keyword>
<keyword id="KW-0865">Zymogen</keyword>
<dbReference type="EC" id="4.1.1.65" evidence="1"/>
<dbReference type="EMBL" id="CP000848">
    <property type="protein sequence ID" value="ABV75936.1"/>
    <property type="molecule type" value="Genomic_DNA"/>
</dbReference>
<dbReference type="RefSeq" id="WP_012150539.1">
    <property type="nucleotide sequence ID" value="NZ_CP121767.1"/>
</dbReference>
<dbReference type="GeneID" id="79937102"/>
<dbReference type="KEGG" id="rri:A1G_01860"/>
<dbReference type="HOGENOM" id="CLU_072492_0_0_5"/>
<dbReference type="UniPathway" id="UPA00558">
    <property type="reaction ID" value="UER00616"/>
</dbReference>
<dbReference type="Proteomes" id="UP000006832">
    <property type="component" value="Chromosome"/>
</dbReference>
<dbReference type="GO" id="GO:0005886">
    <property type="term" value="C:plasma membrane"/>
    <property type="evidence" value="ECO:0007669"/>
    <property type="project" value="UniProtKB-SubCell"/>
</dbReference>
<dbReference type="GO" id="GO:0004609">
    <property type="term" value="F:phosphatidylserine decarboxylase activity"/>
    <property type="evidence" value="ECO:0007669"/>
    <property type="project" value="UniProtKB-UniRule"/>
</dbReference>
<dbReference type="GO" id="GO:0006646">
    <property type="term" value="P:phosphatidylethanolamine biosynthetic process"/>
    <property type="evidence" value="ECO:0007669"/>
    <property type="project" value="UniProtKB-UniRule"/>
</dbReference>
<dbReference type="HAMAP" id="MF_00664">
    <property type="entry name" value="PS_decarb_PSD_A"/>
    <property type="match status" value="1"/>
</dbReference>
<dbReference type="InterPro" id="IPR003817">
    <property type="entry name" value="PS_Dcarbxylase"/>
</dbReference>
<dbReference type="InterPro" id="IPR033175">
    <property type="entry name" value="PSD-A"/>
</dbReference>
<dbReference type="NCBIfam" id="NF003677">
    <property type="entry name" value="PRK05305.1-1"/>
    <property type="match status" value="1"/>
</dbReference>
<dbReference type="NCBIfam" id="NF003678">
    <property type="entry name" value="PRK05305.1-2"/>
    <property type="match status" value="1"/>
</dbReference>
<dbReference type="NCBIfam" id="NF003679">
    <property type="entry name" value="PRK05305.1-3"/>
    <property type="match status" value="1"/>
</dbReference>
<dbReference type="NCBIfam" id="NF003681">
    <property type="entry name" value="PRK05305.2-1"/>
    <property type="match status" value="1"/>
</dbReference>
<dbReference type="NCBIfam" id="NF003685">
    <property type="entry name" value="PRK05305.2-5"/>
    <property type="match status" value="1"/>
</dbReference>
<dbReference type="PANTHER" id="PTHR35809">
    <property type="entry name" value="ARCHAETIDYLSERINE DECARBOXYLASE PROENZYME-RELATED"/>
    <property type="match status" value="1"/>
</dbReference>
<dbReference type="PANTHER" id="PTHR35809:SF1">
    <property type="entry name" value="ARCHAETIDYLSERINE DECARBOXYLASE PROENZYME-RELATED"/>
    <property type="match status" value="1"/>
</dbReference>
<dbReference type="Pfam" id="PF02666">
    <property type="entry name" value="PS_Dcarbxylase"/>
    <property type="match status" value="1"/>
</dbReference>
<accession>A8GRB1</accession>
<sequence>MKQYNDLFKIIHREGYIFIASFALVSFLLASFNEKLGCIGCIATAWCIYFFRNPDRFVPISDDLVISPADGIIQEIKEALPPPELGLGDVEMIRVSIFLNLFNVHVNRIPANGKILALHYNPGKFFNASLDKASIYNERQSVLMEMAQGQKIVFVQIAGLIARRIVCDLEEGNEVKTGERYGIIRFGSRVDVYLPLKTALLVSKGQTAIGGETIIADFGRKKTTEFKFERK</sequence>